<organism>
    <name type="scientific">Rickettsia canadensis (strain McKiel)</name>
    <dbReference type="NCBI Taxonomy" id="293613"/>
    <lineage>
        <taxon>Bacteria</taxon>
        <taxon>Pseudomonadati</taxon>
        <taxon>Pseudomonadota</taxon>
        <taxon>Alphaproteobacteria</taxon>
        <taxon>Rickettsiales</taxon>
        <taxon>Rickettsiaceae</taxon>
        <taxon>Rickettsieae</taxon>
        <taxon>Rickettsia</taxon>
        <taxon>belli group</taxon>
    </lineage>
</organism>
<reference key="1">
    <citation type="submission" date="2007-09" db="EMBL/GenBank/DDBJ databases">
        <title>Complete genome sequence of Rickettsia canadensis.</title>
        <authorList>
            <person name="Madan A."/>
            <person name="Fahey J."/>
            <person name="Helton E."/>
            <person name="Ketteman M."/>
            <person name="Madan A."/>
            <person name="Rodrigues S."/>
            <person name="Sanchez A."/>
            <person name="Whiting M."/>
            <person name="Dasch G."/>
            <person name="Eremeeva M."/>
        </authorList>
    </citation>
    <scope>NUCLEOTIDE SEQUENCE [LARGE SCALE GENOMIC DNA]</scope>
    <source>
        <strain>McKiel</strain>
    </source>
</reference>
<gene>
    <name evidence="1" type="primary">xerC</name>
    <name type="ordered locus">A1E_05250</name>
</gene>
<comment type="function">
    <text evidence="1">Site-specific tyrosine recombinase, which acts by catalyzing the cutting and rejoining of the recombining DNA molecules. The XerC-XerD complex is essential to convert dimers of the bacterial chromosome into monomers to permit their segregation at cell division. It also contributes to the segregational stability of plasmids.</text>
</comment>
<comment type="subunit">
    <text evidence="1">Forms a cyclic heterotetrameric complex composed of two molecules of XerC and two molecules of XerD.</text>
</comment>
<comment type="subcellular location">
    <subcellularLocation>
        <location evidence="1">Cytoplasm</location>
    </subcellularLocation>
</comment>
<comment type="similarity">
    <text evidence="1">Belongs to the 'phage' integrase family. XerC subfamily.</text>
</comment>
<accession>A8F033</accession>
<proteinExistence type="inferred from homology"/>
<name>XERC_RICCK</name>
<protein>
    <recommendedName>
        <fullName evidence="1">Tyrosine recombinase XerC</fullName>
    </recommendedName>
</protein>
<evidence type="ECO:0000255" key="1">
    <source>
        <dbReference type="HAMAP-Rule" id="MF_01808"/>
    </source>
</evidence>
<evidence type="ECO:0000255" key="2">
    <source>
        <dbReference type="PROSITE-ProRule" id="PRU01246"/>
    </source>
</evidence>
<evidence type="ECO:0000255" key="3">
    <source>
        <dbReference type="PROSITE-ProRule" id="PRU01248"/>
    </source>
</evidence>
<feature type="chain" id="PRO_1000070034" description="Tyrosine recombinase XerC">
    <location>
        <begin position="1"/>
        <end position="305"/>
    </location>
</feature>
<feature type="domain" description="Core-binding (CB)" evidence="3">
    <location>
        <begin position="4"/>
        <end position="95"/>
    </location>
</feature>
<feature type="domain" description="Tyr recombinase" evidence="2">
    <location>
        <begin position="116"/>
        <end position="298"/>
    </location>
</feature>
<feature type="active site" evidence="1">
    <location>
        <position position="159"/>
    </location>
</feature>
<feature type="active site" evidence="1">
    <location>
        <position position="182"/>
    </location>
</feature>
<feature type="active site" evidence="1">
    <location>
        <position position="250"/>
    </location>
</feature>
<feature type="active site" evidence="1">
    <location>
        <position position="253"/>
    </location>
</feature>
<feature type="active site" evidence="1">
    <location>
        <position position="276"/>
    </location>
</feature>
<feature type="active site" description="O-(3'-phospho-DNA)-tyrosine intermediate" evidence="1">
    <location>
        <position position="285"/>
    </location>
</feature>
<keyword id="KW-0131">Cell cycle</keyword>
<keyword id="KW-0132">Cell division</keyword>
<keyword id="KW-0159">Chromosome partition</keyword>
<keyword id="KW-0963">Cytoplasm</keyword>
<keyword id="KW-0229">DNA integration</keyword>
<keyword id="KW-0233">DNA recombination</keyword>
<keyword id="KW-0238">DNA-binding</keyword>
<dbReference type="EMBL" id="CP000409">
    <property type="protein sequence ID" value="ABV73966.1"/>
    <property type="molecule type" value="Genomic_DNA"/>
</dbReference>
<dbReference type="RefSeq" id="WP_012149161.1">
    <property type="nucleotide sequence ID" value="NC_009879.1"/>
</dbReference>
<dbReference type="SMR" id="A8F033"/>
<dbReference type="STRING" id="293613.A1E_05250"/>
<dbReference type="KEGG" id="rcm:A1E_05250"/>
<dbReference type="eggNOG" id="COG4974">
    <property type="taxonomic scope" value="Bacteria"/>
</dbReference>
<dbReference type="HOGENOM" id="CLU_027562_9_0_5"/>
<dbReference type="Proteomes" id="UP000007056">
    <property type="component" value="Chromosome"/>
</dbReference>
<dbReference type="GO" id="GO:0005737">
    <property type="term" value="C:cytoplasm"/>
    <property type="evidence" value="ECO:0007669"/>
    <property type="project" value="UniProtKB-SubCell"/>
</dbReference>
<dbReference type="GO" id="GO:0003677">
    <property type="term" value="F:DNA binding"/>
    <property type="evidence" value="ECO:0007669"/>
    <property type="project" value="UniProtKB-KW"/>
</dbReference>
<dbReference type="GO" id="GO:0009037">
    <property type="term" value="F:tyrosine-based site-specific recombinase activity"/>
    <property type="evidence" value="ECO:0007669"/>
    <property type="project" value="UniProtKB-UniRule"/>
</dbReference>
<dbReference type="GO" id="GO:0051301">
    <property type="term" value="P:cell division"/>
    <property type="evidence" value="ECO:0007669"/>
    <property type="project" value="UniProtKB-KW"/>
</dbReference>
<dbReference type="GO" id="GO:0007059">
    <property type="term" value="P:chromosome segregation"/>
    <property type="evidence" value="ECO:0007669"/>
    <property type="project" value="UniProtKB-UniRule"/>
</dbReference>
<dbReference type="GO" id="GO:0006313">
    <property type="term" value="P:DNA transposition"/>
    <property type="evidence" value="ECO:0007669"/>
    <property type="project" value="UniProtKB-UniRule"/>
</dbReference>
<dbReference type="Gene3D" id="1.10.150.130">
    <property type="match status" value="1"/>
</dbReference>
<dbReference type="Gene3D" id="1.10.443.10">
    <property type="entry name" value="Intergrase catalytic core"/>
    <property type="match status" value="1"/>
</dbReference>
<dbReference type="HAMAP" id="MF_01808">
    <property type="entry name" value="Recomb_XerC_XerD"/>
    <property type="match status" value="1"/>
</dbReference>
<dbReference type="InterPro" id="IPR044068">
    <property type="entry name" value="CB"/>
</dbReference>
<dbReference type="InterPro" id="IPR011010">
    <property type="entry name" value="DNA_brk_join_enz"/>
</dbReference>
<dbReference type="InterPro" id="IPR013762">
    <property type="entry name" value="Integrase-like_cat_sf"/>
</dbReference>
<dbReference type="InterPro" id="IPR002104">
    <property type="entry name" value="Integrase_catalytic"/>
</dbReference>
<dbReference type="InterPro" id="IPR010998">
    <property type="entry name" value="Integrase_recombinase_N"/>
</dbReference>
<dbReference type="InterPro" id="IPR004107">
    <property type="entry name" value="Integrase_SAM-like_N"/>
</dbReference>
<dbReference type="InterPro" id="IPR023009">
    <property type="entry name" value="Tyrosine_recombinase_XerC/XerD"/>
</dbReference>
<dbReference type="InterPro" id="IPR050090">
    <property type="entry name" value="Tyrosine_recombinase_XerCD"/>
</dbReference>
<dbReference type="PANTHER" id="PTHR30349">
    <property type="entry name" value="PHAGE INTEGRASE-RELATED"/>
    <property type="match status" value="1"/>
</dbReference>
<dbReference type="PANTHER" id="PTHR30349:SF90">
    <property type="entry name" value="TYROSINE RECOMBINASE XERD"/>
    <property type="match status" value="1"/>
</dbReference>
<dbReference type="Pfam" id="PF02899">
    <property type="entry name" value="Phage_int_SAM_1"/>
    <property type="match status" value="1"/>
</dbReference>
<dbReference type="Pfam" id="PF00589">
    <property type="entry name" value="Phage_integrase"/>
    <property type="match status" value="1"/>
</dbReference>
<dbReference type="SUPFAM" id="SSF56349">
    <property type="entry name" value="DNA breaking-rejoining enzymes"/>
    <property type="match status" value="1"/>
</dbReference>
<dbReference type="PROSITE" id="PS51900">
    <property type="entry name" value="CB"/>
    <property type="match status" value="1"/>
</dbReference>
<dbReference type="PROSITE" id="PS51898">
    <property type="entry name" value="TYR_RECOMBINASE"/>
    <property type="match status" value="1"/>
</dbReference>
<sequence>MLDTSIQELINKWQQYLILQKNYSHHTVVSYNNDLKHFLEFMHYYNSDLVTINHIKTADIRLIRSWLAKRNCNNFTTSSISRGLSAVKNFYKFLEKTTQLNSHIIFSIKSPKKTKLLPKSLSEDDVVISLKHIEEYGNVKWVELRNKALLVLIYATGLRISEALSITKLHLQNLEFIRIIGKGSKERIIPWLPIVKNLITQYLEILPYKLGENEPIFRGKQGKKLQPTVFNRELIKLKRFYGLPEHLTAHSFRHSFASHLLEHGADLRSIQELLGHKSLSTTQNYTKTSIKHLVSVYTSAYPIKK</sequence>